<evidence type="ECO:0000250" key="1"/>
<evidence type="ECO:0000305" key="2"/>
<organism>
    <name type="scientific">Plasmodium falciparum (isolate 3D7)</name>
    <dbReference type="NCBI Taxonomy" id="36329"/>
    <lineage>
        <taxon>Eukaryota</taxon>
        <taxon>Sar</taxon>
        <taxon>Alveolata</taxon>
        <taxon>Apicomplexa</taxon>
        <taxon>Aconoidasida</taxon>
        <taxon>Haemosporida</taxon>
        <taxon>Plasmodiidae</taxon>
        <taxon>Plasmodium</taxon>
        <taxon>Plasmodium (Laverania)</taxon>
    </lineage>
</organism>
<geneLocation type="apicoplast"/>
<proteinExistence type="inferred from homology"/>
<reference key="1">
    <citation type="journal article" date="1994" name="Mol. Biochem. Parasitol.">
        <title>Phylogenetic analysis of the rpoB gene from the plastid-like DNA of Plasmodium falciparum.</title>
        <authorList>
            <person name="Gardner M.J."/>
            <person name="Goldman N."/>
            <person name="Barnett P."/>
            <person name="Moore P.W."/>
            <person name="Rangachari K."/>
            <person name="Strath M."/>
            <person name="Whyte A."/>
            <person name="Williamson D.H."/>
            <person name="Wilson R.J.M."/>
        </authorList>
    </citation>
    <scope>NUCLEOTIDE SEQUENCE [GENOMIC DNA]</scope>
    <source>
        <strain>BW/C10</strain>
    </source>
</reference>
<reference key="2">
    <citation type="journal article" date="1996" name="J. Mol. Biol.">
        <title>Complete gene map of the plastid-like DNA of the malaria parasite Plasmodium falciparum.</title>
        <authorList>
            <person name="Wilson R.J.M."/>
            <person name="Denny P.W."/>
            <person name="Preiser P.R."/>
            <person name="Rangachari K."/>
            <person name="Roberts K."/>
            <person name="Roy A."/>
            <person name="Whyte A."/>
            <person name="Strath M."/>
            <person name="Moore D.J."/>
            <person name="Moore P.W."/>
            <person name="Williamson D.H."/>
        </authorList>
    </citation>
    <scope>NUCLEOTIDE SEQUENCE [LARGE SCALE GENOMIC DNA]</scope>
    <source>
        <strain>BW/C10</strain>
    </source>
</reference>
<reference key="3">
    <citation type="journal article" date="1991" name="Mol. Biochem. Parasitol.">
        <title>A circular DNA in malaria parasites encodes an RNA polymerase like that of prokaryotes and chloroplasts.</title>
        <authorList>
            <person name="Gardner M.J."/>
            <person name="Williamson D.H."/>
            <person name="Wilson R.J.M."/>
        </authorList>
    </citation>
    <scope>NUCLEOTIDE SEQUENCE [GENOMIC DNA] OF 328-1024</scope>
</reference>
<accession>P21421</accession>
<name>RPOB_PLAF7</name>
<sequence length="1024" mass="122186">MIYIVNPILVKNNYIISNLYLLLIQEIIYNLRYYILFLNNNINVKFNFIYYKIIILLTNININSIDTIQNINNLLKIILTLKLNFININKIIKFNILIFILPFIYNNIIILNGLYKTCIQLFKKNNKIFIIKFKNNNKNIIYVYIYISLGLRIIFKISKLNIDCYFNNFKFNFLILLLYLNNIYINKNISLFIYNNIINKKILIYNYIKFIYSKYNNINNIISLKLFIIKLNKFNNIYINLLNILFSIKLNFSYYSDFYINNIYNKKFYSIIDNLLIKSKKYLKIFKYQLLNINRNIYNNITLLLNNKKYINIILENININPLVQYSDQVNNLSEINQKFKINMITTGLNSKFILNNDLRELPRNILGYISLINTNEGLTCGLVNYLTTNIFLNLKYLFVIYYKHIFYNRYNFKLLLNIFNKNFYNISFNNIYLKKNINFNKTTILTINKNTFKICNITQNIIYIPFNYLLSFIENLIPFIHYNDSIRNLMSIKMHTQIVPIIYPNLSNIITNYNFILNKYLNHLIISYQEGIVIYVSCIKIIIRDLFNRQIIYYLNNYKKINQNILLIYKPIVWVGEKVNIGQILAINSNLLNSEYSLGNNLLVGYGSYLGYEYEDAIIISRKILYNNLYTSLHLNIYEISLNIINNIPEICSINLSKMYYKNIKHLDKYGIIKEGTYILANNILISKLMFMPFIFNNKSLINIINFLFGSKLRIFKNKPIISTIHDIGRVIKIEILPNHLYNKTEKNNIYLKFRIYIGIQKYLQLGDKICNRHGHKGIISYISEINDIPYLNNKIQPDIFISAISIPSRINIGQIFEGIYGLNSLYLNTRYIISNNLNKNYYNNYNHIFNYYKYNYNNNFNINSKMSYNYNKYYLKNPFTGNMINNSICLNNIYYYKLIHMIKDKFRYRFIGLYSELTQQPIKGNTKQGGQRFGEMEVWALEAFGASYLFKEFFTYKSDDIKSRKILKNYLFNNYKIKNTFISETFKLILKELQSLAINIEAFCIFNDTNNLLENLPINIIY</sequence>
<feature type="chain" id="PRO_0000048070" description="DNA-directed RNA polymerase subunit beta">
    <location>
        <begin position="1"/>
        <end position="1024"/>
    </location>
</feature>
<protein>
    <recommendedName>
        <fullName>DNA-directed RNA polymerase subunit beta</fullName>
        <ecNumber>2.7.7.6</ecNumber>
    </recommendedName>
    <alternativeName>
        <fullName>PEP</fullName>
    </alternativeName>
    <alternativeName>
        <fullName>Plastid-encoded RNA polymerase subunit beta</fullName>
        <shortName>RNA polymerase subunit beta</shortName>
    </alternativeName>
</protein>
<keyword id="KW-0933">Apicoplast</keyword>
<keyword id="KW-0240">DNA-directed RNA polymerase</keyword>
<keyword id="KW-0548">Nucleotidyltransferase</keyword>
<keyword id="KW-0934">Plastid</keyword>
<keyword id="KW-0804">Transcription</keyword>
<keyword id="KW-0808">Transferase</keyword>
<dbReference type="EC" id="2.7.7.6"/>
<dbReference type="EMBL" id="X75544">
    <property type="protein sequence ID" value="CAA53232.1"/>
    <property type="molecule type" value="Genomic_DNA"/>
</dbReference>
<dbReference type="EMBL" id="X95275">
    <property type="protein sequence ID" value="CAA64572.1"/>
    <property type="molecule type" value="Genomic_DNA"/>
</dbReference>
<dbReference type="EMBL" id="X52177">
    <property type="protein sequence ID" value="CAA36427.1"/>
    <property type="molecule type" value="Genomic_DNA"/>
</dbReference>
<dbReference type="PIR" id="S72282">
    <property type="entry name" value="RNZQBF"/>
</dbReference>
<dbReference type="SMR" id="P21421"/>
<dbReference type="FunCoup" id="P21421">
    <property type="interactions" value="5"/>
</dbReference>
<dbReference type="STRING" id="36329.P21421"/>
<dbReference type="VEuPathDB" id="PlasmoDB:PF3D7_API04400"/>
<dbReference type="InParanoid" id="P21421"/>
<dbReference type="OrthoDB" id="35661at2759"/>
<dbReference type="PhylomeDB" id="P21421"/>
<dbReference type="GO" id="GO:0020011">
    <property type="term" value="C:apicoplast"/>
    <property type="evidence" value="ECO:0007669"/>
    <property type="project" value="UniProtKB-SubCell"/>
</dbReference>
<dbReference type="GO" id="GO:0000428">
    <property type="term" value="C:DNA-directed RNA polymerase complex"/>
    <property type="evidence" value="ECO:0007669"/>
    <property type="project" value="UniProtKB-KW"/>
</dbReference>
<dbReference type="GO" id="GO:0005739">
    <property type="term" value="C:mitochondrion"/>
    <property type="evidence" value="ECO:0007669"/>
    <property type="project" value="GOC"/>
</dbReference>
<dbReference type="GO" id="GO:0003677">
    <property type="term" value="F:DNA binding"/>
    <property type="evidence" value="ECO:0007669"/>
    <property type="project" value="InterPro"/>
</dbReference>
<dbReference type="GO" id="GO:0003899">
    <property type="term" value="F:DNA-directed RNA polymerase activity"/>
    <property type="evidence" value="ECO:0007669"/>
    <property type="project" value="UniProtKB-EC"/>
</dbReference>
<dbReference type="GO" id="GO:0032549">
    <property type="term" value="F:ribonucleoside binding"/>
    <property type="evidence" value="ECO:0007669"/>
    <property type="project" value="InterPro"/>
</dbReference>
<dbReference type="GO" id="GO:0006351">
    <property type="term" value="P:DNA-templated transcription"/>
    <property type="evidence" value="ECO:0007669"/>
    <property type="project" value="InterPro"/>
</dbReference>
<dbReference type="FunFam" id="2.40.270.10:FF:000016">
    <property type="entry name" value="DNA-directed RNA polymerase subunit beta"/>
    <property type="match status" value="1"/>
</dbReference>
<dbReference type="Gene3D" id="2.40.50.100">
    <property type="match status" value="1"/>
</dbReference>
<dbReference type="Gene3D" id="2.40.50.150">
    <property type="match status" value="1"/>
</dbReference>
<dbReference type="Gene3D" id="3.90.1100.10">
    <property type="match status" value="1"/>
</dbReference>
<dbReference type="Gene3D" id="2.40.270.10">
    <property type="entry name" value="DNA-directed RNA polymerase, subunit 2, domain 6"/>
    <property type="match status" value="1"/>
</dbReference>
<dbReference type="Gene3D" id="3.90.1800.10">
    <property type="entry name" value="RNA polymerase alpha subunit dimerisation domain"/>
    <property type="match status" value="1"/>
</dbReference>
<dbReference type="InterPro" id="IPR015712">
    <property type="entry name" value="DNA-dir_RNA_pol_su2"/>
</dbReference>
<dbReference type="InterPro" id="IPR007120">
    <property type="entry name" value="DNA-dir_RNAP_su2_dom"/>
</dbReference>
<dbReference type="InterPro" id="IPR037033">
    <property type="entry name" value="DNA-dir_RNAP_su2_hyb_sf"/>
</dbReference>
<dbReference type="InterPro" id="IPR007121">
    <property type="entry name" value="RNA_pol_bsu_CS"/>
</dbReference>
<dbReference type="InterPro" id="IPR007645">
    <property type="entry name" value="RNA_pol_Rpb2_3"/>
</dbReference>
<dbReference type="InterPro" id="IPR007641">
    <property type="entry name" value="RNA_pol_Rpb2_7"/>
</dbReference>
<dbReference type="InterPro" id="IPR014724">
    <property type="entry name" value="RNA_pol_RPB2_OB-fold"/>
</dbReference>
<dbReference type="PANTHER" id="PTHR20856">
    <property type="entry name" value="DNA-DIRECTED RNA POLYMERASE I SUBUNIT 2"/>
    <property type="match status" value="1"/>
</dbReference>
<dbReference type="Pfam" id="PF04565">
    <property type="entry name" value="RNA_pol_Rpb2_3"/>
    <property type="match status" value="1"/>
</dbReference>
<dbReference type="Pfam" id="PF00562">
    <property type="entry name" value="RNA_pol_Rpb2_6"/>
    <property type="match status" value="1"/>
</dbReference>
<dbReference type="Pfam" id="PF04560">
    <property type="entry name" value="RNA_pol_Rpb2_7"/>
    <property type="match status" value="1"/>
</dbReference>
<dbReference type="SUPFAM" id="SSF64484">
    <property type="entry name" value="beta and beta-prime subunits of DNA dependent RNA-polymerase"/>
    <property type="match status" value="1"/>
</dbReference>
<dbReference type="PROSITE" id="PS01166">
    <property type="entry name" value="RNA_POL_BETA"/>
    <property type="match status" value="1"/>
</dbReference>
<gene>
    <name type="primary">rpoB</name>
</gene>
<comment type="function">
    <text evidence="1">DNA-dependent RNA polymerase catalyzes the transcription of DNA into RNA using the four ribonucleoside triphosphates as substrates.</text>
</comment>
<comment type="catalytic activity">
    <reaction>
        <text>RNA(n) + a ribonucleoside 5'-triphosphate = RNA(n+1) + diphosphate</text>
        <dbReference type="Rhea" id="RHEA:21248"/>
        <dbReference type="Rhea" id="RHEA-COMP:14527"/>
        <dbReference type="Rhea" id="RHEA-COMP:17342"/>
        <dbReference type="ChEBI" id="CHEBI:33019"/>
        <dbReference type="ChEBI" id="CHEBI:61557"/>
        <dbReference type="ChEBI" id="CHEBI:140395"/>
        <dbReference type="EC" id="2.7.7.6"/>
    </reaction>
</comment>
<comment type="subunit">
    <text evidence="2">In plastids the minimal PEP RNA polymerase catalytic core is composed of four subunits: alpha, beta, beta', and beta''. When a (nuclear-encoded) sigma factor is associated with the core the holoenzyme is formed, which can initiate transcription (Potential).</text>
</comment>
<comment type="subcellular location">
    <subcellularLocation>
        <location>Plastid</location>
        <location>Apicoplast</location>
    </subcellularLocation>
</comment>
<comment type="similarity">
    <text evidence="2">Belongs to the RNA polymerase beta chain family.</text>
</comment>